<feature type="chain" id="PRO_0000411379" description="Translation initiation factor IF-1">
    <location>
        <begin position="1"/>
        <end position="72"/>
    </location>
</feature>
<feature type="domain" description="S1-like" evidence="1">
    <location>
        <begin position="1"/>
        <end position="72"/>
    </location>
</feature>
<accession>P0DB83</accession>
<accession>P65124</accession>
<accession>Q9A1V3</accession>
<reference key="1">
    <citation type="journal article" date="2003" name="Genome Res.">
        <title>Genome sequence of an M3 strain of Streptococcus pyogenes reveals a large-scale genomic rearrangement in invasive strains and new insights into phage evolution.</title>
        <authorList>
            <person name="Nakagawa I."/>
            <person name="Kurokawa K."/>
            <person name="Yamashita A."/>
            <person name="Nakata M."/>
            <person name="Tomiyasu Y."/>
            <person name="Okahashi N."/>
            <person name="Kawabata S."/>
            <person name="Yamazaki K."/>
            <person name="Shiba T."/>
            <person name="Yasunaga T."/>
            <person name="Hayashi H."/>
            <person name="Hattori M."/>
            <person name="Hamada S."/>
        </authorList>
    </citation>
    <scope>NUCLEOTIDE SEQUENCE [LARGE SCALE GENOMIC DNA]</scope>
    <source>
        <strain>SSI-1</strain>
    </source>
</reference>
<comment type="function">
    <text evidence="1">One of the essential components for the initiation of protein synthesis. Stabilizes the binding of IF-2 and IF-3 on the 30S subunit to which N-formylmethionyl-tRNA(fMet) subsequently binds. Helps modulate mRNA selection, yielding the 30S pre-initiation complex (PIC). Upon addition of the 50S ribosomal subunit IF-1, IF-2 and IF-3 are released leaving the mature 70S translation initiation complex.</text>
</comment>
<comment type="subunit">
    <text evidence="1">Component of the 30S ribosomal translation pre-initiation complex which assembles on the 30S ribosome in the order IF-2 and IF-3, IF-1 and N-formylmethionyl-tRNA(fMet); mRNA recruitment can occur at any time during PIC assembly.</text>
</comment>
<comment type="subcellular location">
    <subcellularLocation>
        <location evidence="1">Cytoplasm</location>
    </subcellularLocation>
</comment>
<comment type="similarity">
    <text evidence="1">Belongs to the IF-1 family.</text>
</comment>
<comment type="sequence caution" evidence="2">
    <conflict type="erroneous initiation">
        <sequence resource="EMBL-CDS" id="BAC63159"/>
    </conflict>
    <text>Truncated N-terminus.</text>
</comment>
<dbReference type="EMBL" id="BA000034">
    <property type="protein sequence ID" value="BAC63159.1"/>
    <property type="status" value="ALT_INIT"/>
    <property type="molecule type" value="Genomic_DNA"/>
</dbReference>
<dbReference type="RefSeq" id="WP_001040189.1">
    <property type="nucleotide sequence ID" value="NC_004606.1"/>
</dbReference>
<dbReference type="SMR" id="P0DB83"/>
<dbReference type="GeneID" id="98392414"/>
<dbReference type="KEGG" id="sps:SPs0064"/>
<dbReference type="HOGENOM" id="CLU_151267_5_0_9"/>
<dbReference type="GO" id="GO:0005829">
    <property type="term" value="C:cytosol"/>
    <property type="evidence" value="ECO:0007669"/>
    <property type="project" value="TreeGrafter"/>
</dbReference>
<dbReference type="GO" id="GO:0043022">
    <property type="term" value="F:ribosome binding"/>
    <property type="evidence" value="ECO:0007669"/>
    <property type="project" value="UniProtKB-UniRule"/>
</dbReference>
<dbReference type="GO" id="GO:0019843">
    <property type="term" value="F:rRNA binding"/>
    <property type="evidence" value="ECO:0007669"/>
    <property type="project" value="UniProtKB-UniRule"/>
</dbReference>
<dbReference type="GO" id="GO:0003743">
    <property type="term" value="F:translation initiation factor activity"/>
    <property type="evidence" value="ECO:0007669"/>
    <property type="project" value="UniProtKB-UniRule"/>
</dbReference>
<dbReference type="CDD" id="cd04451">
    <property type="entry name" value="S1_IF1"/>
    <property type="match status" value="1"/>
</dbReference>
<dbReference type="FunFam" id="2.40.50.140:FF:000002">
    <property type="entry name" value="Translation initiation factor IF-1"/>
    <property type="match status" value="1"/>
</dbReference>
<dbReference type="Gene3D" id="2.40.50.140">
    <property type="entry name" value="Nucleic acid-binding proteins"/>
    <property type="match status" value="1"/>
</dbReference>
<dbReference type="HAMAP" id="MF_00075">
    <property type="entry name" value="IF_1"/>
    <property type="match status" value="1"/>
</dbReference>
<dbReference type="InterPro" id="IPR012340">
    <property type="entry name" value="NA-bd_OB-fold"/>
</dbReference>
<dbReference type="InterPro" id="IPR006196">
    <property type="entry name" value="RNA-binding_domain_S1_IF1"/>
</dbReference>
<dbReference type="InterPro" id="IPR003029">
    <property type="entry name" value="S1_domain"/>
</dbReference>
<dbReference type="InterPro" id="IPR004368">
    <property type="entry name" value="TIF_IF1"/>
</dbReference>
<dbReference type="NCBIfam" id="TIGR00008">
    <property type="entry name" value="infA"/>
    <property type="match status" value="1"/>
</dbReference>
<dbReference type="PANTHER" id="PTHR33370">
    <property type="entry name" value="TRANSLATION INITIATION FACTOR IF-1, CHLOROPLASTIC"/>
    <property type="match status" value="1"/>
</dbReference>
<dbReference type="PANTHER" id="PTHR33370:SF1">
    <property type="entry name" value="TRANSLATION INITIATION FACTOR IF-1, CHLOROPLASTIC"/>
    <property type="match status" value="1"/>
</dbReference>
<dbReference type="Pfam" id="PF01176">
    <property type="entry name" value="eIF-1a"/>
    <property type="match status" value="1"/>
</dbReference>
<dbReference type="SMART" id="SM00316">
    <property type="entry name" value="S1"/>
    <property type="match status" value="1"/>
</dbReference>
<dbReference type="SUPFAM" id="SSF50249">
    <property type="entry name" value="Nucleic acid-binding proteins"/>
    <property type="match status" value="1"/>
</dbReference>
<dbReference type="PROSITE" id="PS50832">
    <property type="entry name" value="S1_IF1_TYPE"/>
    <property type="match status" value="1"/>
</dbReference>
<keyword id="KW-0963">Cytoplasm</keyword>
<keyword id="KW-0396">Initiation factor</keyword>
<keyword id="KW-0648">Protein biosynthesis</keyword>
<keyword id="KW-0694">RNA-binding</keyword>
<keyword id="KW-0699">rRNA-binding</keyword>
<proteinExistence type="inferred from homology"/>
<organism>
    <name type="scientific">Streptococcus pyogenes serotype M3 (strain SSI-1)</name>
    <dbReference type="NCBI Taxonomy" id="193567"/>
    <lineage>
        <taxon>Bacteria</taxon>
        <taxon>Bacillati</taxon>
        <taxon>Bacillota</taxon>
        <taxon>Bacilli</taxon>
        <taxon>Lactobacillales</taxon>
        <taxon>Streptococcaceae</taxon>
        <taxon>Streptococcus</taxon>
    </lineage>
</organism>
<protein>
    <recommendedName>
        <fullName evidence="1">Translation initiation factor IF-1</fullName>
    </recommendedName>
</protein>
<sequence length="72" mass="8273">MAKEDVIEIEGKVVETMPNAMFTVELENGHQILATVSGKIRKNYIRILVGDRVTVEMSPYDLTRGRITYRFK</sequence>
<name>IF1_STRPQ</name>
<gene>
    <name evidence="1" type="primary">infA</name>
    <name type="ordered locus">SPs0064</name>
</gene>
<evidence type="ECO:0000255" key="1">
    <source>
        <dbReference type="HAMAP-Rule" id="MF_00075"/>
    </source>
</evidence>
<evidence type="ECO:0000305" key="2"/>